<keyword id="KW-0963">Cytoplasm</keyword>
<keyword id="KW-0255">Endonuclease</keyword>
<keyword id="KW-0378">Hydrolase</keyword>
<keyword id="KW-0460">Magnesium</keyword>
<keyword id="KW-0479">Metal-binding</keyword>
<keyword id="KW-0507">mRNA processing</keyword>
<keyword id="KW-0540">Nuclease</keyword>
<keyword id="KW-0694">RNA-binding</keyword>
<keyword id="KW-0698">rRNA processing</keyword>
<keyword id="KW-0699">rRNA-binding</keyword>
<keyword id="KW-0819">tRNA processing</keyword>
<gene>
    <name evidence="1" type="primary">rnc</name>
    <name type="ordered locus">SPA0284</name>
</gene>
<sequence length="226" mass="25505">MNPIVINRLQRKLGYTFNHQELLQQALTHRSASSKHNERLEFLGDSILSFVIANALYHRFPRVDEGDMSRMRATLVRGNTLAELAREFDLGECLRLGPGELKSGGFRRESILADTVEALIGGVFLDSNIQTVEQLILNWYKTRLDEISPGDKQKDPKTRLQEYLQGRHLPLPSYLVVQVRGEAHDQEFTIHCQVSGLSEPVVGTGSSRRKAEQAAAEQALKKLELE</sequence>
<protein>
    <recommendedName>
        <fullName evidence="1">Ribonuclease 3</fullName>
        <ecNumber evidence="1">3.1.26.3</ecNumber>
    </recommendedName>
    <alternativeName>
        <fullName evidence="1">Ribonuclease III</fullName>
        <shortName evidence="1">RNase III</shortName>
    </alternativeName>
</protein>
<dbReference type="EC" id="3.1.26.3" evidence="1"/>
<dbReference type="EMBL" id="CP000026">
    <property type="protein sequence ID" value="AAV76306.1"/>
    <property type="molecule type" value="Genomic_DNA"/>
</dbReference>
<dbReference type="RefSeq" id="WP_001068341.1">
    <property type="nucleotide sequence ID" value="NC_006511.1"/>
</dbReference>
<dbReference type="SMR" id="Q5PIG5"/>
<dbReference type="GeneID" id="66757008"/>
<dbReference type="KEGG" id="spt:SPA0284"/>
<dbReference type="HOGENOM" id="CLU_000907_1_1_6"/>
<dbReference type="Proteomes" id="UP000008185">
    <property type="component" value="Chromosome"/>
</dbReference>
<dbReference type="GO" id="GO:0005737">
    <property type="term" value="C:cytoplasm"/>
    <property type="evidence" value="ECO:0007669"/>
    <property type="project" value="UniProtKB-SubCell"/>
</dbReference>
<dbReference type="GO" id="GO:0003725">
    <property type="term" value="F:double-stranded RNA binding"/>
    <property type="evidence" value="ECO:0007669"/>
    <property type="project" value="TreeGrafter"/>
</dbReference>
<dbReference type="GO" id="GO:0046872">
    <property type="term" value="F:metal ion binding"/>
    <property type="evidence" value="ECO:0007669"/>
    <property type="project" value="UniProtKB-KW"/>
</dbReference>
<dbReference type="GO" id="GO:0004525">
    <property type="term" value="F:ribonuclease III activity"/>
    <property type="evidence" value="ECO:0007669"/>
    <property type="project" value="UniProtKB-UniRule"/>
</dbReference>
<dbReference type="GO" id="GO:0019843">
    <property type="term" value="F:rRNA binding"/>
    <property type="evidence" value="ECO:0007669"/>
    <property type="project" value="UniProtKB-KW"/>
</dbReference>
<dbReference type="GO" id="GO:0006397">
    <property type="term" value="P:mRNA processing"/>
    <property type="evidence" value="ECO:0007669"/>
    <property type="project" value="UniProtKB-UniRule"/>
</dbReference>
<dbReference type="GO" id="GO:0010468">
    <property type="term" value="P:regulation of gene expression"/>
    <property type="evidence" value="ECO:0007669"/>
    <property type="project" value="TreeGrafter"/>
</dbReference>
<dbReference type="GO" id="GO:0006364">
    <property type="term" value="P:rRNA processing"/>
    <property type="evidence" value="ECO:0007669"/>
    <property type="project" value="UniProtKB-UniRule"/>
</dbReference>
<dbReference type="GO" id="GO:0008033">
    <property type="term" value="P:tRNA processing"/>
    <property type="evidence" value="ECO:0007669"/>
    <property type="project" value="UniProtKB-KW"/>
</dbReference>
<dbReference type="CDD" id="cd10845">
    <property type="entry name" value="DSRM_RNAse_III_family"/>
    <property type="match status" value="1"/>
</dbReference>
<dbReference type="CDD" id="cd00593">
    <property type="entry name" value="RIBOc"/>
    <property type="match status" value="1"/>
</dbReference>
<dbReference type="FunFam" id="1.10.1520.10:FF:000001">
    <property type="entry name" value="Ribonuclease 3"/>
    <property type="match status" value="1"/>
</dbReference>
<dbReference type="FunFam" id="3.30.160.20:FF:000003">
    <property type="entry name" value="Ribonuclease 3"/>
    <property type="match status" value="1"/>
</dbReference>
<dbReference type="Gene3D" id="3.30.160.20">
    <property type="match status" value="1"/>
</dbReference>
<dbReference type="Gene3D" id="1.10.1520.10">
    <property type="entry name" value="Ribonuclease III domain"/>
    <property type="match status" value="1"/>
</dbReference>
<dbReference type="HAMAP" id="MF_00104">
    <property type="entry name" value="RNase_III"/>
    <property type="match status" value="1"/>
</dbReference>
<dbReference type="InterPro" id="IPR014720">
    <property type="entry name" value="dsRBD_dom"/>
</dbReference>
<dbReference type="InterPro" id="IPR011907">
    <property type="entry name" value="RNase_III"/>
</dbReference>
<dbReference type="InterPro" id="IPR000999">
    <property type="entry name" value="RNase_III_dom"/>
</dbReference>
<dbReference type="InterPro" id="IPR036389">
    <property type="entry name" value="RNase_III_sf"/>
</dbReference>
<dbReference type="NCBIfam" id="TIGR02191">
    <property type="entry name" value="RNaseIII"/>
    <property type="match status" value="1"/>
</dbReference>
<dbReference type="PANTHER" id="PTHR11207:SF0">
    <property type="entry name" value="RIBONUCLEASE 3"/>
    <property type="match status" value="1"/>
</dbReference>
<dbReference type="PANTHER" id="PTHR11207">
    <property type="entry name" value="RIBONUCLEASE III"/>
    <property type="match status" value="1"/>
</dbReference>
<dbReference type="Pfam" id="PF00035">
    <property type="entry name" value="dsrm"/>
    <property type="match status" value="1"/>
</dbReference>
<dbReference type="Pfam" id="PF14622">
    <property type="entry name" value="Ribonucleas_3_3"/>
    <property type="match status" value="1"/>
</dbReference>
<dbReference type="SMART" id="SM00358">
    <property type="entry name" value="DSRM"/>
    <property type="match status" value="1"/>
</dbReference>
<dbReference type="SMART" id="SM00535">
    <property type="entry name" value="RIBOc"/>
    <property type="match status" value="1"/>
</dbReference>
<dbReference type="SUPFAM" id="SSF54768">
    <property type="entry name" value="dsRNA-binding domain-like"/>
    <property type="match status" value="1"/>
</dbReference>
<dbReference type="SUPFAM" id="SSF69065">
    <property type="entry name" value="RNase III domain-like"/>
    <property type="match status" value="1"/>
</dbReference>
<dbReference type="PROSITE" id="PS50137">
    <property type="entry name" value="DS_RBD"/>
    <property type="match status" value="1"/>
</dbReference>
<dbReference type="PROSITE" id="PS00517">
    <property type="entry name" value="RNASE_3_1"/>
    <property type="match status" value="1"/>
</dbReference>
<dbReference type="PROSITE" id="PS50142">
    <property type="entry name" value="RNASE_3_2"/>
    <property type="match status" value="1"/>
</dbReference>
<comment type="function">
    <text evidence="1">Digests double-stranded RNA. Involved in the processing of primary rRNA transcript to yield the immediate precursors to the large and small rRNAs (23S and 16S). Processes some mRNAs, and tRNAs when they are encoded in the rRNA operon. Processes pre-crRNA and tracrRNA of type II CRISPR loci if present in the organism.</text>
</comment>
<comment type="catalytic activity">
    <reaction evidence="1">
        <text>Endonucleolytic cleavage to 5'-phosphomonoester.</text>
        <dbReference type="EC" id="3.1.26.3"/>
    </reaction>
</comment>
<comment type="cofactor">
    <cofactor evidence="1">
        <name>Mg(2+)</name>
        <dbReference type="ChEBI" id="CHEBI:18420"/>
    </cofactor>
</comment>
<comment type="subunit">
    <text evidence="1">Homodimer.</text>
</comment>
<comment type="subcellular location">
    <subcellularLocation>
        <location evidence="1">Cytoplasm</location>
    </subcellularLocation>
</comment>
<comment type="similarity">
    <text evidence="1">Belongs to the ribonuclease III family.</text>
</comment>
<evidence type="ECO:0000255" key="1">
    <source>
        <dbReference type="HAMAP-Rule" id="MF_00104"/>
    </source>
</evidence>
<reference key="1">
    <citation type="journal article" date="2004" name="Nat. Genet.">
        <title>Comparison of genome degradation in Paratyphi A and Typhi, human-restricted serovars of Salmonella enterica that cause typhoid.</title>
        <authorList>
            <person name="McClelland M."/>
            <person name="Sanderson K.E."/>
            <person name="Clifton S.W."/>
            <person name="Latreille P."/>
            <person name="Porwollik S."/>
            <person name="Sabo A."/>
            <person name="Meyer R."/>
            <person name="Bieri T."/>
            <person name="Ozersky P."/>
            <person name="McLellan M."/>
            <person name="Harkins C.R."/>
            <person name="Wang C."/>
            <person name="Nguyen C."/>
            <person name="Berghoff A."/>
            <person name="Elliott G."/>
            <person name="Kohlberg S."/>
            <person name="Strong C."/>
            <person name="Du F."/>
            <person name="Carter J."/>
            <person name="Kremizki C."/>
            <person name="Layman D."/>
            <person name="Leonard S."/>
            <person name="Sun H."/>
            <person name="Fulton L."/>
            <person name="Nash W."/>
            <person name="Miner T."/>
            <person name="Minx P."/>
            <person name="Delehaunty K."/>
            <person name="Fronick C."/>
            <person name="Magrini V."/>
            <person name="Nhan M."/>
            <person name="Warren W."/>
            <person name="Florea L."/>
            <person name="Spieth J."/>
            <person name="Wilson R.K."/>
        </authorList>
    </citation>
    <scope>NUCLEOTIDE SEQUENCE [LARGE SCALE GENOMIC DNA]</scope>
    <source>
        <strain>ATCC 9150 / SARB42</strain>
    </source>
</reference>
<feature type="chain" id="PRO_0000228578" description="Ribonuclease 3">
    <location>
        <begin position="1"/>
        <end position="226"/>
    </location>
</feature>
<feature type="domain" description="RNase III" evidence="1">
    <location>
        <begin position="6"/>
        <end position="128"/>
    </location>
</feature>
<feature type="domain" description="DRBM" evidence="1">
    <location>
        <begin position="155"/>
        <end position="225"/>
    </location>
</feature>
<feature type="active site" evidence="1">
    <location>
        <position position="45"/>
    </location>
</feature>
<feature type="active site" evidence="1">
    <location>
        <position position="117"/>
    </location>
</feature>
<feature type="binding site" evidence="1">
    <location>
        <position position="41"/>
    </location>
    <ligand>
        <name>Mg(2+)</name>
        <dbReference type="ChEBI" id="CHEBI:18420"/>
    </ligand>
</feature>
<feature type="binding site" evidence="1">
    <location>
        <position position="114"/>
    </location>
    <ligand>
        <name>Mg(2+)</name>
        <dbReference type="ChEBI" id="CHEBI:18420"/>
    </ligand>
</feature>
<feature type="binding site" evidence="1">
    <location>
        <position position="117"/>
    </location>
    <ligand>
        <name>Mg(2+)</name>
        <dbReference type="ChEBI" id="CHEBI:18420"/>
    </ligand>
</feature>
<name>RNC_SALPA</name>
<accession>Q5PIG5</accession>
<organism>
    <name type="scientific">Salmonella paratyphi A (strain ATCC 9150 / SARB42)</name>
    <dbReference type="NCBI Taxonomy" id="295319"/>
    <lineage>
        <taxon>Bacteria</taxon>
        <taxon>Pseudomonadati</taxon>
        <taxon>Pseudomonadota</taxon>
        <taxon>Gammaproteobacteria</taxon>
        <taxon>Enterobacterales</taxon>
        <taxon>Enterobacteriaceae</taxon>
        <taxon>Salmonella</taxon>
    </lineage>
</organism>
<proteinExistence type="inferred from homology"/>